<keyword id="KW-0007">Acetylation</keyword>
<keyword id="KW-0131">Cell cycle</keyword>
<keyword id="KW-0132">Cell division</keyword>
<keyword id="KW-0175">Coiled coil</keyword>
<keyword id="KW-0963">Cytoplasm</keyword>
<keyword id="KW-0717">Septation</keyword>
<accession>B5YZ66</accession>
<sequence length="79" mass="9403">MSLEVFEKLEAKVQQAIDTITLLQMEIEELKEKNNSLSQEVQNAQHQREELERENNHLKEQQNGWQERLQALLGRMEEV</sequence>
<protein>
    <recommendedName>
        <fullName evidence="1">Cell division protein ZapB</fullName>
    </recommendedName>
</protein>
<name>ZAPB_ECO5E</name>
<reference key="1">
    <citation type="journal article" date="2011" name="Proc. Natl. Acad. Sci. U.S.A.">
        <title>Genomic anatomy of Escherichia coli O157:H7 outbreaks.</title>
        <authorList>
            <person name="Eppinger M."/>
            <person name="Mammel M.K."/>
            <person name="Leclerc J.E."/>
            <person name="Ravel J."/>
            <person name="Cebula T.A."/>
        </authorList>
    </citation>
    <scope>NUCLEOTIDE SEQUENCE [LARGE SCALE GENOMIC DNA]</scope>
    <source>
        <strain>EC4115 / EHEC</strain>
    </source>
</reference>
<gene>
    <name evidence="1" type="primary">zapB</name>
    <name type="ordered locus">ECH74115_5383</name>
</gene>
<comment type="function">
    <text evidence="1">Non-essential, abundant cell division factor that is required for proper Z-ring formation. It is recruited early to the divisome by direct interaction with FtsZ, stimulating Z-ring assembly and thereby promoting cell division earlier in the cell cycle. Its recruitment to the Z-ring requires functional FtsA or ZipA.</text>
</comment>
<comment type="subunit">
    <text evidence="1">Homodimer. The ends of the coiled-coil dimer bind to each other, forming polymers. Interacts with FtsZ.</text>
</comment>
<comment type="subcellular location">
    <subcellularLocation>
        <location evidence="1">Cytoplasm</location>
    </subcellularLocation>
    <text evidence="1">Localizes to the septum at mid-cell, in a FtsZ-like pattern.</text>
</comment>
<comment type="similarity">
    <text evidence="1">Belongs to the ZapB family.</text>
</comment>
<dbReference type="EMBL" id="CP001164">
    <property type="protein sequence ID" value="ACI34690.1"/>
    <property type="molecule type" value="Genomic_DNA"/>
</dbReference>
<dbReference type="SMR" id="B5YZ66"/>
<dbReference type="KEGG" id="ecf:ECH74115_5383"/>
<dbReference type="HOGENOM" id="CLU_171174_2_0_6"/>
<dbReference type="GO" id="GO:0005737">
    <property type="term" value="C:cytoplasm"/>
    <property type="evidence" value="ECO:0007669"/>
    <property type="project" value="UniProtKB-SubCell"/>
</dbReference>
<dbReference type="GO" id="GO:0000917">
    <property type="term" value="P:division septum assembly"/>
    <property type="evidence" value="ECO:0007669"/>
    <property type="project" value="UniProtKB-KW"/>
</dbReference>
<dbReference type="GO" id="GO:0043093">
    <property type="term" value="P:FtsZ-dependent cytokinesis"/>
    <property type="evidence" value="ECO:0007669"/>
    <property type="project" value="UniProtKB-UniRule"/>
</dbReference>
<dbReference type="FunFam" id="1.20.5.340:FF:000014">
    <property type="entry name" value="Cell division protein ZapB"/>
    <property type="match status" value="1"/>
</dbReference>
<dbReference type="Gene3D" id="1.20.5.340">
    <property type="match status" value="1"/>
</dbReference>
<dbReference type="HAMAP" id="MF_01196">
    <property type="entry name" value="ZapB"/>
    <property type="match status" value="1"/>
</dbReference>
<dbReference type="InterPro" id="IPR009252">
    <property type="entry name" value="Cell_div_ZapB"/>
</dbReference>
<dbReference type="NCBIfam" id="NF011951">
    <property type="entry name" value="PRK15422.1"/>
    <property type="match status" value="1"/>
</dbReference>
<dbReference type="Pfam" id="PF06005">
    <property type="entry name" value="ZapB"/>
    <property type="match status" value="1"/>
</dbReference>
<feature type="chain" id="PRO_1000138430" description="Cell division protein ZapB">
    <location>
        <begin position="1"/>
        <end position="79"/>
    </location>
</feature>
<feature type="region of interest" description="Disordered" evidence="2">
    <location>
        <begin position="34"/>
        <end position="65"/>
    </location>
</feature>
<feature type="coiled-coil region" evidence="1">
    <location>
        <begin position="3"/>
        <end position="79"/>
    </location>
</feature>
<feature type="compositionally biased region" description="Polar residues" evidence="2">
    <location>
        <begin position="35"/>
        <end position="45"/>
    </location>
</feature>
<feature type="compositionally biased region" description="Basic and acidic residues" evidence="2">
    <location>
        <begin position="46"/>
        <end position="60"/>
    </location>
</feature>
<feature type="modified residue" description="N6-acetyllysine" evidence="1">
    <location>
        <position position="8"/>
    </location>
</feature>
<proteinExistence type="inferred from homology"/>
<evidence type="ECO:0000255" key="1">
    <source>
        <dbReference type="HAMAP-Rule" id="MF_01196"/>
    </source>
</evidence>
<evidence type="ECO:0000256" key="2">
    <source>
        <dbReference type="SAM" id="MobiDB-lite"/>
    </source>
</evidence>
<organism>
    <name type="scientific">Escherichia coli O157:H7 (strain EC4115 / EHEC)</name>
    <dbReference type="NCBI Taxonomy" id="444450"/>
    <lineage>
        <taxon>Bacteria</taxon>
        <taxon>Pseudomonadati</taxon>
        <taxon>Pseudomonadota</taxon>
        <taxon>Gammaproteobacteria</taxon>
        <taxon>Enterobacterales</taxon>
        <taxon>Enterobacteriaceae</taxon>
        <taxon>Escherichia</taxon>
    </lineage>
</organism>